<sequence length="390" mass="45674">MTQVHFTLKSEEIQSIIEYSVKDDVSKNILTTVFNQLMENQRTEYIQAKEYERTENRQSQRNGYYERSFTTRVGTLELKVPRTRDGHFSPTVFERYQRNEKALMASMLEMYVSGVSTRKVSKIVEELCGKSVSKSFVSSLTEQLEPMVNEWQNRLLSEKNYPYLMTDVLYIKVREENRVLSKSCHIAIGITKDGDREIIGFMIQSGESEETWTTFFEYLKERGLQGTELVISDAHKGLVSAIRKSFTNVSWQRCQVHFLRNIFTTIPKKNSKSFREAVKGIFKFTDINLAREAKNRLIHDYIDQPKYSKACASLDDGFEDAFQYTVQGNSHNRLKSTNLIERLNQEVRRREKIIRIFPNQTSANRLIGAVLMDLHDEWIYSSRKYINFDK</sequence>
<comment type="function">
    <text evidence="1">Required for the transposition of the insertion element.</text>
</comment>
<comment type="similarity">
    <text evidence="2">Belongs to the transposase mutator family.</text>
</comment>
<geneLocation type="plasmid">
    <name>pTEF1</name>
</geneLocation>
<geneLocation type="plasmid">
    <name>pTEF2</name>
</geneLocation>
<geneLocation type="plasmid">
    <name>pTEF3</name>
</geneLocation>
<gene>
    <name type="ordered locus">EF_0125</name>
</gene>
<gene>
    <name type="ordered locus">EF_0529</name>
</gene>
<gene>
    <name type="ordered locus">EF_2187</name>
</gene>
<gene>
    <name type="ordered locus">EF_2632</name>
</gene>
<gene>
    <name type="ordered locus">EF_3100</name>
</gene>
<gene>
    <name type="ordered locus">EF_3215</name>
</gene>
<gene>
    <name type="ordered locus">EF_A0059</name>
</gene>
<gene>
    <name type="ordered locus">EF_A0062</name>
</gene>
<gene>
    <name type="ordered locus">EF_B0052</name>
</gene>
<gene>
    <name type="ordered locus">EF_C0004</name>
</gene>
<evidence type="ECO:0000250" key="1"/>
<evidence type="ECO:0000305" key="2"/>
<dbReference type="EMBL" id="AE016830">
    <property type="protein sequence ID" value="AAO80000.1"/>
    <property type="molecule type" value="Genomic_DNA"/>
</dbReference>
<dbReference type="EMBL" id="AE016830">
    <property type="protein sequence ID" value="AAO80376.1"/>
    <property type="molecule type" value="Genomic_DNA"/>
</dbReference>
<dbReference type="EMBL" id="AE016830">
    <property type="protein sequence ID" value="AAO81919.1"/>
    <property type="molecule type" value="Genomic_DNA"/>
</dbReference>
<dbReference type="EMBL" id="AE016830">
    <property type="protein sequence ID" value="AAO82341.1"/>
    <property type="molecule type" value="Genomic_DNA"/>
</dbReference>
<dbReference type="EMBL" id="AE016830">
    <property type="protein sequence ID" value="AAO82780.1"/>
    <property type="molecule type" value="Genomic_DNA"/>
</dbReference>
<dbReference type="EMBL" id="AE016830">
    <property type="protein sequence ID" value="AAO82887.1"/>
    <property type="molecule type" value="Genomic_DNA"/>
</dbReference>
<dbReference type="EMBL" id="AE016833">
    <property type="protein sequence ID" value="AAO83053.1"/>
    <property type="molecule type" value="Genomic_DNA"/>
</dbReference>
<dbReference type="EMBL" id="AE016833">
    <property type="protein sequence ID" value="AAO83056.1"/>
    <property type="molecule type" value="Genomic_DNA"/>
</dbReference>
<dbReference type="EMBL" id="AE016831">
    <property type="protein sequence ID" value="AAO83141.1"/>
    <property type="molecule type" value="Genomic_DNA"/>
</dbReference>
<dbReference type="EMBL" id="AE016832">
    <property type="protein sequence ID" value="AAO83077.1"/>
    <property type="molecule type" value="Genomic_DNA"/>
</dbReference>
<dbReference type="RefSeq" id="NP_813928.1">
    <property type="nucleotide sequence ID" value="NC_004668.1"/>
</dbReference>
<dbReference type="RefSeq" id="NP_814305.1">
    <property type="nucleotide sequence ID" value="NC_004668.1"/>
</dbReference>
<dbReference type="RefSeq" id="NP_815849.1">
    <property type="nucleotide sequence ID" value="NC_004668.1"/>
</dbReference>
<dbReference type="RefSeq" id="NP_816271.1">
    <property type="nucleotide sequence ID" value="NC_004668.1"/>
</dbReference>
<dbReference type="RefSeq" id="NP_816710.1">
    <property type="nucleotide sequence ID" value="NC_004668.1"/>
</dbReference>
<dbReference type="RefSeq" id="NP_816817.1">
    <property type="nucleotide sequence ID" value="NC_004668.1"/>
</dbReference>
<dbReference type="RefSeq" id="NP_816982.1">
    <property type="nucleotide sequence ID" value="NC_004669.1"/>
</dbReference>
<dbReference type="RefSeq" id="NP_816985.1">
    <property type="nucleotide sequence ID" value="NC_004669.1"/>
</dbReference>
<dbReference type="RefSeq" id="NP_817006.1">
    <property type="nucleotide sequence ID" value="NC_004670.1"/>
</dbReference>
<dbReference type="RefSeq" id="NP_817070.1">
    <property type="nucleotide sequence ID" value="NC_004671.1"/>
</dbReference>
<dbReference type="RefSeq" id="WP_000195429.1">
    <property type="nucleotide sequence ID" value="NZ_KE136532.1"/>
</dbReference>
<dbReference type="SMR" id="P59787"/>
<dbReference type="STRING" id="226185.EF_0125"/>
<dbReference type="DNASU" id="1202229"/>
<dbReference type="EnsemblBacteria" id="AAO80000">
    <property type="protein sequence ID" value="AAO80000"/>
    <property type="gene ID" value="EF_0125"/>
</dbReference>
<dbReference type="EnsemblBacteria" id="AAO80376">
    <property type="protein sequence ID" value="AAO80376"/>
    <property type="gene ID" value="EF_0529"/>
</dbReference>
<dbReference type="EnsemblBacteria" id="AAO81919">
    <property type="protein sequence ID" value="AAO81919"/>
    <property type="gene ID" value="EF_2187"/>
</dbReference>
<dbReference type="EnsemblBacteria" id="AAO82341">
    <property type="protein sequence ID" value="AAO82341"/>
    <property type="gene ID" value="EF_2632"/>
</dbReference>
<dbReference type="EnsemblBacteria" id="AAO82780">
    <property type="protein sequence ID" value="AAO82780"/>
    <property type="gene ID" value="EF_3100"/>
</dbReference>
<dbReference type="EnsemblBacteria" id="AAO82887">
    <property type="protein sequence ID" value="AAO82887"/>
    <property type="gene ID" value="EF_3215"/>
</dbReference>
<dbReference type="EnsemblBacteria" id="AAO83053">
    <property type="protein sequence ID" value="AAO83053"/>
    <property type="gene ID" value="EF_A0059"/>
</dbReference>
<dbReference type="EnsemblBacteria" id="AAO83056">
    <property type="protein sequence ID" value="AAO83056"/>
    <property type="gene ID" value="EF_A0062"/>
</dbReference>
<dbReference type="EnsemblBacteria" id="AAO83077">
    <property type="protein sequence ID" value="AAO83077"/>
    <property type="gene ID" value="EF_C0004"/>
</dbReference>
<dbReference type="EnsemblBacteria" id="AAO83141">
    <property type="protein sequence ID" value="AAO83141"/>
    <property type="gene ID" value="EF_B0052"/>
</dbReference>
<dbReference type="KEGG" id="efa:EF0125"/>
<dbReference type="KEGG" id="efa:EF0529"/>
<dbReference type="KEGG" id="efa:EF2187"/>
<dbReference type="KEGG" id="efa:EF2632"/>
<dbReference type="KEGG" id="efa:EF3100"/>
<dbReference type="KEGG" id="efa:EF3215"/>
<dbReference type="KEGG" id="efa:EFA0059"/>
<dbReference type="KEGG" id="efa:EFA0062"/>
<dbReference type="KEGG" id="efa:EFB0052"/>
<dbReference type="KEGG" id="efa:EFC0004"/>
<dbReference type="eggNOG" id="COG3328">
    <property type="taxonomic scope" value="Bacteria"/>
</dbReference>
<dbReference type="HOGENOM" id="CLU_036805_8_0_9"/>
<dbReference type="Proteomes" id="UP000001415">
    <property type="component" value="Chromosome"/>
</dbReference>
<dbReference type="Proteomes" id="UP000001415">
    <property type="component" value="Plasmid pTEF1"/>
</dbReference>
<dbReference type="Proteomes" id="UP000001415">
    <property type="component" value="Plasmid pTEF2"/>
</dbReference>
<dbReference type="Proteomes" id="UP000001415">
    <property type="component" value="Plasmid pTEF3"/>
</dbReference>
<dbReference type="GO" id="GO:0003677">
    <property type="term" value="F:DNA binding"/>
    <property type="evidence" value="ECO:0007669"/>
    <property type="project" value="UniProtKB-KW"/>
</dbReference>
<dbReference type="GO" id="GO:0004803">
    <property type="term" value="F:transposase activity"/>
    <property type="evidence" value="ECO:0007669"/>
    <property type="project" value="InterPro"/>
</dbReference>
<dbReference type="GO" id="GO:0006313">
    <property type="term" value="P:DNA transposition"/>
    <property type="evidence" value="ECO:0007669"/>
    <property type="project" value="InterPro"/>
</dbReference>
<dbReference type="InterPro" id="IPR001207">
    <property type="entry name" value="Transposase_mutator"/>
</dbReference>
<dbReference type="NCBIfam" id="NF033543">
    <property type="entry name" value="transpos_IS256"/>
    <property type="match status" value="1"/>
</dbReference>
<dbReference type="PANTHER" id="PTHR33217">
    <property type="entry name" value="TRANSPOSASE FOR INSERTION SEQUENCE ELEMENT IS1081"/>
    <property type="match status" value="1"/>
</dbReference>
<dbReference type="PANTHER" id="PTHR33217:SF7">
    <property type="entry name" value="TRANSPOSASE FOR INSERTION SEQUENCE ELEMENT IS1081"/>
    <property type="match status" value="1"/>
</dbReference>
<dbReference type="Pfam" id="PF00872">
    <property type="entry name" value="Transposase_mut"/>
    <property type="match status" value="1"/>
</dbReference>
<dbReference type="PROSITE" id="PS01007">
    <property type="entry name" value="TRANSPOSASE_MUTATOR"/>
    <property type="match status" value="1"/>
</dbReference>
<accession>P59787</accession>
<reference key="1">
    <citation type="journal article" date="2003" name="Science">
        <title>Role of mobile DNA in the evolution of vancomycin-resistant Enterococcus faecalis.</title>
        <authorList>
            <person name="Paulsen I.T."/>
            <person name="Banerjei L."/>
            <person name="Myers G.S.A."/>
            <person name="Nelson K.E."/>
            <person name="Seshadri R."/>
            <person name="Read T.D."/>
            <person name="Fouts D.E."/>
            <person name="Eisen J.A."/>
            <person name="Gill S.R."/>
            <person name="Heidelberg J.F."/>
            <person name="Tettelin H."/>
            <person name="Dodson R.J."/>
            <person name="Umayam L.A."/>
            <person name="Brinkac L.M."/>
            <person name="Beanan M.J."/>
            <person name="Daugherty S.C."/>
            <person name="DeBoy R.T."/>
            <person name="Durkin S.A."/>
            <person name="Kolonay J.F."/>
            <person name="Madupu R."/>
            <person name="Nelson W.C."/>
            <person name="Vamathevan J.J."/>
            <person name="Tran B."/>
            <person name="Upton J."/>
            <person name="Hansen T."/>
            <person name="Shetty J."/>
            <person name="Khouri H.M."/>
            <person name="Utterback T.R."/>
            <person name="Radune D."/>
            <person name="Ketchum K.A."/>
            <person name="Dougherty B.A."/>
            <person name="Fraser C.M."/>
        </authorList>
    </citation>
    <scope>NUCLEOTIDE SEQUENCE [LARGE SCALE GENOMIC DNA]</scope>
    <source>
        <strain>ATCC 700802 / V583</strain>
    </source>
</reference>
<proteinExistence type="inferred from homology"/>
<name>TRA6_ENTFA</name>
<feature type="chain" id="PRO_0000211354" description="Transposase for insertion sequence element IS256 in transposon Tn4001">
    <location>
        <begin position="1"/>
        <end position="390"/>
    </location>
</feature>
<organism>
    <name type="scientific">Enterococcus faecalis (strain ATCC 700802 / V583)</name>
    <dbReference type="NCBI Taxonomy" id="226185"/>
    <lineage>
        <taxon>Bacteria</taxon>
        <taxon>Bacillati</taxon>
        <taxon>Bacillota</taxon>
        <taxon>Bacilli</taxon>
        <taxon>Lactobacillales</taxon>
        <taxon>Enterococcaceae</taxon>
        <taxon>Enterococcus</taxon>
    </lineage>
</organism>
<protein>
    <recommendedName>
        <fullName>Transposase for insertion sequence element IS256 in transposon Tn4001</fullName>
    </recommendedName>
</protein>
<keyword id="KW-0233">DNA recombination</keyword>
<keyword id="KW-0238">DNA-binding</keyword>
<keyword id="KW-0614">Plasmid</keyword>
<keyword id="KW-1185">Reference proteome</keyword>
<keyword id="KW-0814">Transposable element</keyword>
<keyword id="KW-0815">Transposition</keyword>